<comment type="function">
    <text evidence="1">Promotes mitochondrial protein synthesis. May act as a fidelity factor of the translation reaction, by catalyzing a one-codon backward translocation of tRNAs on improperly translocated ribosomes. Binds to mitochondrial ribosomes in a GTP-dependent manner.</text>
</comment>
<comment type="catalytic activity">
    <reaction evidence="1">
        <text>GTP + H2O = GDP + phosphate + H(+)</text>
        <dbReference type="Rhea" id="RHEA:19669"/>
        <dbReference type="ChEBI" id="CHEBI:15377"/>
        <dbReference type="ChEBI" id="CHEBI:15378"/>
        <dbReference type="ChEBI" id="CHEBI:37565"/>
        <dbReference type="ChEBI" id="CHEBI:43474"/>
        <dbReference type="ChEBI" id="CHEBI:58189"/>
    </reaction>
</comment>
<comment type="subcellular location">
    <subcellularLocation>
        <location evidence="1">Mitochondrion inner membrane</location>
        <topology evidence="1">Peripheral membrane protein</topology>
        <orientation evidence="1">Matrix side</orientation>
    </subcellularLocation>
</comment>
<comment type="miscellaneous">
    <text evidence="1">This protein may be expected to contain an N-terminal transit peptide but none has been predicted.</text>
</comment>
<comment type="similarity">
    <text evidence="2">Belongs to the TRAFAC class translation factor GTPase superfamily. Classic translation factor GTPase family. LepA subfamily.</text>
</comment>
<keyword id="KW-0342">GTP-binding</keyword>
<keyword id="KW-0378">Hydrolase</keyword>
<keyword id="KW-0472">Membrane</keyword>
<keyword id="KW-0496">Mitochondrion</keyword>
<keyword id="KW-0999">Mitochondrion inner membrane</keyword>
<keyword id="KW-0547">Nucleotide-binding</keyword>
<keyword id="KW-0648">Protein biosynthesis</keyword>
<accession>C8ZDQ3</accession>
<reference key="1">
    <citation type="journal article" date="2009" name="Proc. Natl. Acad. Sci. U.S.A.">
        <title>Eukaryote-to-eukaryote gene transfer events revealed by the genome sequence of the wine yeast Saccharomyces cerevisiae EC1118.</title>
        <authorList>
            <person name="Novo M."/>
            <person name="Bigey F."/>
            <person name="Beyne E."/>
            <person name="Galeote V."/>
            <person name="Gavory F."/>
            <person name="Mallet S."/>
            <person name="Cambon B."/>
            <person name="Legras J.-L."/>
            <person name="Wincker P."/>
            <person name="Casaregola S."/>
            <person name="Dequin S."/>
        </authorList>
    </citation>
    <scope>NUCLEOTIDE SEQUENCE [LARGE SCALE GENOMIC DNA]</scope>
    <source>
        <strain>Lalvin EC1118 / Prise de mousse</strain>
    </source>
</reference>
<gene>
    <name evidence="1" type="primary">GUF1</name>
    <name type="ORF">EC1118_1L7_1464g</name>
</gene>
<sequence>MLKFRIRPVRHIRCYKRHAYFLRYNHTTTPAQKLQAQIEQIPLENYRNFSIVAHVDHGKSTLSDRLLEITHVIDPNARNKQVLDKLEVERERGITIKAQTCSMFYKDKRTGKNYLLHLIDTPGHVDFRGEVSRSYASCGGAILLVDASQGIQAQTVANFYLAFSLGLKLIPVINKIDLNFTDVKQVKDQIVNNFELPEEDIIGVSAKTGLNVEELLLPAIIDRIPPPTGRPDKPFRALLVDSWYDAYLGAVLLVNIVDGFVRKNDKVICAQTKEKYEVKDIGIMYPDRTSTGTLKTGQVGYLVLGMKDSKEAKIGDTIMHLSKVNETEVLPGFEEQKPMVFVGAFPADGIEFKAMDDDMSRLVLNDRSVTLERETSNALGQGWRLGFLGSLHASVFRERLEKEYGSKLIITQPTVPYLVEFTDGKKKLITNPDEFPDGATKRVNVAAFHEPFIEAVMTLPQEYLGSVIRLCDSNRGEQIDITYLNTNGQVMLKYYLPLSHLVDDFFGKLKSVSRGFASLDYEDAGYRISDVVKLQLLVNGNAIDALSRVLHKSEVERVGREWVKKFKEYVKSQLYEVVIQARANNKIIARETIKARRKDVLQKLHASDVSRRKKLLAKQKEGKKHMKTVGNIQINQEAYQAFLRR</sequence>
<dbReference type="EC" id="3.6.5.-"/>
<dbReference type="EMBL" id="FN393080">
    <property type="protein sequence ID" value="CAY81519.1"/>
    <property type="molecule type" value="Genomic_DNA"/>
</dbReference>
<dbReference type="SMR" id="C8ZDQ3"/>
<dbReference type="HOGENOM" id="CLU_009995_3_1_1"/>
<dbReference type="OrthoDB" id="19201at4893"/>
<dbReference type="Proteomes" id="UP000000286">
    <property type="component" value="Chromosome XII, Scaffold EC1118_1L7"/>
</dbReference>
<dbReference type="GO" id="GO:0005743">
    <property type="term" value="C:mitochondrial inner membrane"/>
    <property type="evidence" value="ECO:0007669"/>
    <property type="project" value="UniProtKB-SubCell"/>
</dbReference>
<dbReference type="GO" id="GO:0005759">
    <property type="term" value="C:mitochondrial matrix"/>
    <property type="evidence" value="ECO:0007669"/>
    <property type="project" value="UniProtKB-UniRule"/>
</dbReference>
<dbReference type="GO" id="GO:0005525">
    <property type="term" value="F:GTP binding"/>
    <property type="evidence" value="ECO:0007669"/>
    <property type="project" value="UniProtKB-UniRule"/>
</dbReference>
<dbReference type="GO" id="GO:0003924">
    <property type="term" value="F:GTPase activity"/>
    <property type="evidence" value="ECO:0007669"/>
    <property type="project" value="UniProtKB-UniRule"/>
</dbReference>
<dbReference type="GO" id="GO:0097177">
    <property type="term" value="F:mitochondrial ribosome binding"/>
    <property type="evidence" value="ECO:0007669"/>
    <property type="project" value="TreeGrafter"/>
</dbReference>
<dbReference type="GO" id="GO:0045727">
    <property type="term" value="P:positive regulation of translation"/>
    <property type="evidence" value="ECO:0007669"/>
    <property type="project" value="UniProtKB-UniRule"/>
</dbReference>
<dbReference type="GO" id="GO:0006412">
    <property type="term" value="P:translation"/>
    <property type="evidence" value="ECO:0007669"/>
    <property type="project" value="UniProtKB-KW"/>
</dbReference>
<dbReference type="CDD" id="cd03699">
    <property type="entry name" value="EF4_II"/>
    <property type="match status" value="1"/>
</dbReference>
<dbReference type="CDD" id="cd16260">
    <property type="entry name" value="EF4_III"/>
    <property type="match status" value="1"/>
</dbReference>
<dbReference type="CDD" id="cd01890">
    <property type="entry name" value="LepA"/>
    <property type="match status" value="1"/>
</dbReference>
<dbReference type="CDD" id="cd03709">
    <property type="entry name" value="lepA_C"/>
    <property type="match status" value="1"/>
</dbReference>
<dbReference type="FunFam" id="3.40.50.300:FF:000078">
    <property type="entry name" value="Elongation factor 4"/>
    <property type="match status" value="1"/>
</dbReference>
<dbReference type="FunFam" id="2.40.30.10:FF:000015">
    <property type="entry name" value="Translation factor GUF1, mitochondrial"/>
    <property type="match status" value="1"/>
</dbReference>
<dbReference type="FunFam" id="3.30.70.240:FF:000007">
    <property type="entry name" value="Translation factor GUF1, mitochondrial"/>
    <property type="match status" value="1"/>
</dbReference>
<dbReference type="FunFam" id="3.30.70.2570:FF:000001">
    <property type="entry name" value="Translation factor GUF1, mitochondrial"/>
    <property type="match status" value="1"/>
</dbReference>
<dbReference type="FunFam" id="3.30.70.870:FF:000004">
    <property type="entry name" value="Translation factor GUF1, mitochondrial"/>
    <property type="match status" value="1"/>
</dbReference>
<dbReference type="Gene3D" id="3.30.70.240">
    <property type="match status" value="1"/>
</dbReference>
<dbReference type="Gene3D" id="3.30.70.2570">
    <property type="entry name" value="Elongation factor 4, C-terminal domain"/>
    <property type="match status" value="1"/>
</dbReference>
<dbReference type="Gene3D" id="3.30.70.870">
    <property type="entry name" value="Elongation Factor G (Translational Gtpase), domain 3"/>
    <property type="match status" value="1"/>
</dbReference>
<dbReference type="Gene3D" id="3.40.50.300">
    <property type="entry name" value="P-loop containing nucleotide triphosphate hydrolases"/>
    <property type="match status" value="1"/>
</dbReference>
<dbReference type="Gene3D" id="2.40.30.10">
    <property type="entry name" value="Translation factors"/>
    <property type="match status" value="1"/>
</dbReference>
<dbReference type="HAMAP" id="MF_00071">
    <property type="entry name" value="LepA"/>
    <property type="match status" value="1"/>
</dbReference>
<dbReference type="InterPro" id="IPR006297">
    <property type="entry name" value="EF-4"/>
</dbReference>
<dbReference type="InterPro" id="IPR035647">
    <property type="entry name" value="EFG_III/V"/>
</dbReference>
<dbReference type="InterPro" id="IPR000640">
    <property type="entry name" value="EFG_V-like"/>
</dbReference>
<dbReference type="InterPro" id="IPR004161">
    <property type="entry name" value="EFTu-like_2"/>
</dbReference>
<dbReference type="InterPro" id="IPR031157">
    <property type="entry name" value="G_TR_CS"/>
</dbReference>
<dbReference type="InterPro" id="IPR038363">
    <property type="entry name" value="LepA_C_sf"/>
</dbReference>
<dbReference type="InterPro" id="IPR013842">
    <property type="entry name" value="LepA_CTD"/>
</dbReference>
<dbReference type="InterPro" id="IPR035654">
    <property type="entry name" value="LepA_IV"/>
</dbReference>
<dbReference type="InterPro" id="IPR027417">
    <property type="entry name" value="P-loop_NTPase"/>
</dbReference>
<dbReference type="InterPro" id="IPR005225">
    <property type="entry name" value="Small_GTP-bd"/>
</dbReference>
<dbReference type="InterPro" id="IPR000795">
    <property type="entry name" value="T_Tr_GTP-bd_dom"/>
</dbReference>
<dbReference type="NCBIfam" id="TIGR01393">
    <property type="entry name" value="lepA"/>
    <property type="match status" value="1"/>
</dbReference>
<dbReference type="NCBIfam" id="TIGR00231">
    <property type="entry name" value="small_GTP"/>
    <property type="match status" value="1"/>
</dbReference>
<dbReference type="PANTHER" id="PTHR43512:SF7">
    <property type="entry name" value="TRANSLATION FACTOR GUF1, MITOCHONDRIAL"/>
    <property type="match status" value="1"/>
</dbReference>
<dbReference type="PANTHER" id="PTHR43512">
    <property type="entry name" value="TRANSLATION FACTOR GUF1-RELATED"/>
    <property type="match status" value="1"/>
</dbReference>
<dbReference type="Pfam" id="PF00679">
    <property type="entry name" value="EFG_C"/>
    <property type="match status" value="1"/>
</dbReference>
<dbReference type="Pfam" id="PF00009">
    <property type="entry name" value="GTP_EFTU"/>
    <property type="match status" value="1"/>
</dbReference>
<dbReference type="Pfam" id="PF03144">
    <property type="entry name" value="GTP_EFTU_D2"/>
    <property type="match status" value="1"/>
</dbReference>
<dbReference type="Pfam" id="PF06421">
    <property type="entry name" value="LepA_C"/>
    <property type="match status" value="1"/>
</dbReference>
<dbReference type="PRINTS" id="PR00315">
    <property type="entry name" value="ELONGATNFCT"/>
</dbReference>
<dbReference type="SUPFAM" id="SSF54980">
    <property type="entry name" value="EF-G C-terminal domain-like"/>
    <property type="match status" value="2"/>
</dbReference>
<dbReference type="SUPFAM" id="SSF52540">
    <property type="entry name" value="P-loop containing nucleoside triphosphate hydrolases"/>
    <property type="match status" value="1"/>
</dbReference>
<dbReference type="PROSITE" id="PS00301">
    <property type="entry name" value="G_TR_1"/>
    <property type="match status" value="1"/>
</dbReference>
<dbReference type="PROSITE" id="PS51722">
    <property type="entry name" value="G_TR_2"/>
    <property type="match status" value="1"/>
</dbReference>
<organism>
    <name type="scientific">Saccharomyces cerevisiae (strain Lalvin EC1118 / Prise de mousse)</name>
    <name type="common">Baker's yeast</name>
    <dbReference type="NCBI Taxonomy" id="643680"/>
    <lineage>
        <taxon>Eukaryota</taxon>
        <taxon>Fungi</taxon>
        <taxon>Dikarya</taxon>
        <taxon>Ascomycota</taxon>
        <taxon>Saccharomycotina</taxon>
        <taxon>Saccharomycetes</taxon>
        <taxon>Saccharomycetales</taxon>
        <taxon>Saccharomycetaceae</taxon>
        <taxon>Saccharomyces</taxon>
    </lineage>
</organism>
<protein>
    <recommendedName>
        <fullName evidence="1">Translation factor GUF1, mitochondrial</fullName>
        <ecNumber>3.6.5.-</ecNumber>
    </recommendedName>
    <alternativeName>
        <fullName evidence="1">Elongation factor 4 homolog</fullName>
        <shortName evidence="1">EF-4</shortName>
    </alternativeName>
    <alternativeName>
        <fullName evidence="1">GTPase GUF1</fullName>
    </alternativeName>
    <alternativeName>
        <fullName evidence="1">Ribosomal back-translocase</fullName>
    </alternativeName>
</protein>
<name>GUF1_YEAS8</name>
<feature type="chain" id="PRO_0000402901" description="Translation factor GUF1, mitochondrial">
    <location>
        <begin position="1"/>
        <end position="645"/>
    </location>
</feature>
<feature type="domain" description="tr-type G">
    <location>
        <begin position="44"/>
        <end position="228"/>
    </location>
</feature>
<feature type="binding site" evidence="1">
    <location>
        <begin position="53"/>
        <end position="60"/>
    </location>
    <ligand>
        <name>GTP</name>
        <dbReference type="ChEBI" id="CHEBI:37565"/>
    </ligand>
</feature>
<feature type="binding site" evidence="1">
    <location>
        <begin position="120"/>
        <end position="124"/>
    </location>
    <ligand>
        <name>GTP</name>
        <dbReference type="ChEBI" id="CHEBI:37565"/>
    </ligand>
</feature>
<feature type="binding site" evidence="1">
    <location>
        <begin position="174"/>
        <end position="177"/>
    </location>
    <ligand>
        <name>GTP</name>
        <dbReference type="ChEBI" id="CHEBI:37565"/>
    </ligand>
</feature>
<proteinExistence type="inferred from homology"/>
<evidence type="ECO:0000255" key="1">
    <source>
        <dbReference type="HAMAP-Rule" id="MF_03137"/>
    </source>
</evidence>
<evidence type="ECO:0000305" key="2"/>